<reference key="1">
    <citation type="submission" date="2008-03" db="EMBL/GenBank/DDBJ databases">
        <title>Complete sequence of Leptothrix cholodnii SP-6.</title>
        <authorList>
            <consortium name="US DOE Joint Genome Institute"/>
            <person name="Copeland A."/>
            <person name="Lucas S."/>
            <person name="Lapidus A."/>
            <person name="Glavina del Rio T."/>
            <person name="Dalin E."/>
            <person name="Tice H."/>
            <person name="Bruce D."/>
            <person name="Goodwin L."/>
            <person name="Pitluck S."/>
            <person name="Chertkov O."/>
            <person name="Brettin T."/>
            <person name="Detter J.C."/>
            <person name="Han C."/>
            <person name="Kuske C.R."/>
            <person name="Schmutz J."/>
            <person name="Larimer F."/>
            <person name="Land M."/>
            <person name="Hauser L."/>
            <person name="Kyrpides N."/>
            <person name="Lykidis A."/>
            <person name="Emerson D."/>
            <person name="Richardson P."/>
        </authorList>
    </citation>
    <scope>NUCLEOTIDE SEQUENCE [LARGE SCALE GENOMIC DNA]</scope>
    <source>
        <strain>ATCC 51168 / LMG 8142 / SP-6</strain>
    </source>
</reference>
<name>SYA_LEPCP</name>
<keyword id="KW-0030">Aminoacyl-tRNA synthetase</keyword>
<keyword id="KW-0067">ATP-binding</keyword>
<keyword id="KW-0963">Cytoplasm</keyword>
<keyword id="KW-0436">Ligase</keyword>
<keyword id="KW-0479">Metal-binding</keyword>
<keyword id="KW-0547">Nucleotide-binding</keyword>
<keyword id="KW-0648">Protein biosynthesis</keyword>
<keyword id="KW-1185">Reference proteome</keyword>
<keyword id="KW-0694">RNA-binding</keyword>
<keyword id="KW-0820">tRNA-binding</keyword>
<keyword id="KW-0862">Zinc</keyword>
<sequence length="875" mass="93794">MKASEIRSTFLKFFESKGHQIVGSSPVVPGDDPTLLFTNAGMNQFKDVFLGFDKRPYSRATTSQKCIRAGGKHNDLDNVGYTARHHTFFEMLGNFSFGDYFKHDAISYAWELLTEHFKLPKDKLWVTVYSEDDEAYEIWNKVVGVPAERIVRIGDNKGARYMSDNFWMMGDTGPCGPCTEIFFDHGEGIPGGPPGSPDEDGDRYIEIWNNVFMQFNRTEDGVMHKLPKPSVDTGMGLERITAVLQHVHSNYEIDLFVALLAAAKAAVESAGGKDVDPESPSLKVIADHIRACSFTIVDGVIPGNEGRGYVLRRIARRAIRHGYKLGARTPFFHKIVAELVAQMGEAYPELRAAQARVTEVLKQEEERFFQTIQHGMEILEHALAGGTKQVDGETAFKLHDTYGFPVDLTADVCRERGVTVDQAGFDAAMEHQRSQARAAGKFKMAAGLAYSGAPTAFHGYEHLVCETSKVVAIYVDGTPVDAAQAGDDAAIVLDHTPFYAESGGQAGDSGELRNGSTRVVVADTFKIQADVFGHHGRIVEGSVKVGDSFVAKVDAELRAKTVRNHSATHLMHKALREVLGAHVQQKGSLVNAERTRFDFAHNAPVSDAQIRQVEAIVNAEILANAAASAQVMALDDAQKSGAMMLFGEKYGETVRVLSIGSSKELCGGTHVKATGDIGLFKVVAESGVAAGIRRIEAITGDNALAYLQSLESTVNGVASALKSAVPEVPARISGLQDQVRALEKELAALKGKLASSQGDSLLAQTVDINGLKVLAVVLEGADAATLRTTMDQLKNKLKTAAIVLAAVDGGKVQLAAGVTADSTAKVKAGELVNFVAQQVGGKGGGKPDMAMAGGTDPSKLAAALASVPGWVGERV</sequence>
<feature type="chain" id="PRO_0000347659" description="Alanine--tRNA ligase">
    <location>
        <begin position="1"/>
        <end position="875"/>
    </location>
</feature>
<feature type="binding site" evidence="1">
    <location>
        <position position="565"/>
    </location>
    <ligand>
        <name>Zn(2+)</name>
        <dbReference type="ChEBI" id="CHEBI:29105"/>
    </ligand>
</feature>
<feature type="binding site" evidence="1">
    <location>
        <position position="569"/>
    </location>
    <ligand>
        <name>Zn(2+)</name>
        <dbReference type="ChEBI" id="CHEBI:29105"/>
    </ligand>
</feature>
<feature type="binding site" evidence="1">
    <location>
        <position position="666"/>
    </location>
    <ligand>
        <name>Zn(2+)</name>
        <dbReference type="ChEBI" id="CHEBI:29105"/>
    </ligand>
</feature>
<feature type="binding site" evidence="1">
    <location>
        <position position="670"/>
    </location>
    <ligand>
        <name>Zn(2+)</name>
        <dbReference type="ChEBI" id="CHEBI:29105"/>
    </ligand>
</feature>
<protein>
    <recommendedName>
        <fullName evidence="1">Alanine--tRNA ligase</fullName>
        <ecNumber evidence="1">6.1.1.7</ecNumber>
    </recommendedName>
    <alternativeName>
        <fullName evidence="1">Alanyl-tRNA synthetase</fullName>
        <shortName evidence="1">AlaRS</shortName>
    </alternativeName>
</protein>
<comment type="function">
    <text evidence="1">Catalyzes the attachment of alanine to tRNA(Ala) in a two-step reaction: alanine is first activated by ATP to form Ala-AMP and then transferred to the acceptor end of tRNA(Ala). Also edits incorrectly charged Ser-tRNA(Ala) and Gly-tRNA(Ala) via its editing domain.</text>
</comment>
<comment type="catalytic activity">
    <reaction evidence="1">
        <text>tRNA(Ala) + L-alanine + ATP = L-alanyl-tRNA(Ala) + AMP + diphosphate</text>
        <dbReference type="Rhea" id="RHEA:12540"/>
        <dbReference type="Rhea" id="RHEA-COMP:9657"/>
        <dbReference type="Rhea" id="RHEA-COMP:9923"/>
        <dbReference type="ChEBI" id="CHEBI:30616"/>
        <dbReference type="ChEBI" id="CHEBI:33019"/>
        <dbReference type="ChEBI" id="CHEBI:57972"/>
        <dbReference type="ChEBI" id="CHEBI:78442"/>
        <dbReference type="ChEBI" id="CHEBI:78497"/>
        <dbReference type="ChEBI" id="CHEBI:456215"/>
        <dbReference type="EC" id="6.1.1.7"/>
    </reaction>
</comment>
<comment type="cofactor">
    <cofactor evidence="1">
        <name>Zn(2+)</name>
        <dbReference type="ChEBI" id="CHEBI:29105"/>
    </cofactor>
    <text evidence="1">Binds 1 zinc ion per subunit.</text>
</comment>
<comment type="subcellular location">
    <subcellularLocation>
        <location evidence="1">Cytoplasm</location>
    </subcellularLocation>
</comment>
<comment type="domain">
    <text evidence="1">Consists of three domains; the N-terminal catalytic domain, the editing domain and the C-terminal C-Ala domain. The editing domain removes incorrectly charged amino acids, while the C-Ala domain, along with tRNA(Ala), serves as a bridge to cooperatively bring together the editing and aminoacylation centers thus stimulating deacylation of misacylated tRNAs.</text>
</comment>
<comment type="similarity">
    <text evidence="1">Belongs to the class-II aminoacyl-tRNA synthetase family.</text>
</comment>
<proteinExistence type="inferred from homology"/>
<gene>
    <name evidence="1" type="primary">alaS</name>
    <name type="ordered locus">Lcho_2001</name>
</gene>
<dbReference type="EC" id="6.1.1.7" evidence="1"/>
<dbReference type="EMBL" id="CP001013">
    <property type="protein sequence ID" value="ACB34268.1"/>
    <property type="molecule type" value="Genomic_DNA"/>
</dbReference>
<dbReference type="RefSeq" id="WP_012347028.1">
    <property type="nucleotide sequence ID" value="NC_010524.1"/>
</dbReference>
<dbReference type="SMR" id="B1Y1G9"/>
<dbReference type="STRING" id="395495.Lcho_2001"/>
<dbReference type="KEGG" id="lch:Lcho_2001"/>
<dbReference type="eggNOG" id="COG0013">
    <property type="taxonomic scope" value="Bacteria"/>
</dbReference>
<dbReference type="HOGENOM" id="CLU_004485_1_1_4"/>
<dbReference type="OrthoDB" id="9803884at2"/>
<dbReference type="Proteomes" id="UP000001693">
    <property type="component" value="Chromosome"/>
</dbReference>
<dbReference type="GO" id="GO:0005829">
    <property type="term" value="C:cytosol"/>
    <property type="evidence" value="ECO:0007669"/>
    <property type="project" value="TreeGrafter"/>
</dbReference>
<dbReference type="GO" id="GO:0004813">
    <property type="term" value="F:alanine-tRNA ligase activity"/>
    <property type="evidence" value="ECO:0007669"/>
    <property type="project" value="UniProtKB-UniRule"/>
</dbReference>
<dbReference type="GO" id="GO:0002161">
    <property type="term" value="F:aminoacyl-tRNA deacylase activity"/>
    <property type="evidence" value="ECO:0007669"/>
    <property type="project" value="TreeGrafter"/>
</dbReference>
<dbReference type="GO" id="GO:0005524">
    <property type="term" value="F:ATP binding"/>
    <property type="evidence" value="ECO:0007669"/>
    <property type="project" value="UniProtKB-UniRule"/>
</dbReference>
<dbReference type="GO" id="GO:0000049">
    <property type="term" value="F:tRNA binding"/>
    <property type="evidence" value="ECO:0007669"/>
    <property type="project" value="UniProtKB-KW"/>
</dbReference>
<dbReference type="GO" id="GO:0008270">
    <property type="term" value="F:zinc ion binding"/>
    <property type="evidence" value="ECO:0007669"/>
    <property type="project" value="UniProtKB-UniRule"/>
</dbReference>
<dbReference type="GO" id="GO:0006419">
    <property type="term" value="P:alanyl-tRNA aminoacylation"/>
    <property type="evidence" value="ECO:0007669"/>
    <property type="project" value="UniProtKB-UniRule"/>
</dbReference>
<dbReference type="GO" id="GO:0045892">
    <property type="term" value="P:negative regulation of DNA-templated transcription"/>
    <property type="evidence" value="ECO:0007669"/>
    <property type="project" value="TreeGrafter"/>
</dbReference>
<dbReference type="CDD" id="cd00673">
    <property type="entry name" value="AlaRS_core"/>
    <property type="match status" value="1"/>
</dbReference>
<dbReference type="FunFam" id="2.40.30.130:FF:000001">
    <property type="entry name" value="Alanine--tRNA ligase"/>
    <property type="match status" value="1"/>
</dbReference>
<dbReference type="FunFam" id="3.10.310.40:FF:000001">
    <property type="entry name" value="Alanine--tRNA ligase"/>
    <property type="match status" value="1"/>
</dbReference>
<dbReference type="FunFam" id="3.30.54.20:FF:000001">
    <property type="entry name" value="Alanine--tRNA ligase"/>
    <property type="match status" value="1"/>
</dbReference>
<dbReference type="FunFam" id="3.30.930.10:FF:000004">
    <property type="entry name" value="Alanine--tRNA ligase"/>
    <property type="match status" value="1"/>
</dbReference>
<dbReference type="FunFam" id="3.30.980.10:FF:000004">
    <property type="entry name" value="Alanine--tRNA ligase, cytoplasmic"/>
    <property type="match status" value="1"/>
</dbReference>
<dbReference type="Gene3D" id="2.40.30.130">
    <property type="match status" value="1"/>
</dbReference>
<dbReference type="Gene3D" id="3.10.310.40">
    <property type="match status" value="1"/>
</dbReference>
<dbReference type="Gene3D" id="3.30.54.20">
    <property type="match status" value="1"/>
</dbReference>
<dbReference type="Gene3D" id="6.10.250.550">
    <property type="match status" value="1"/>
</dbReference>
<dbReference type="Gene3D" id="3.30.930.10">
    <property type="entry name" value="Bira Bifunctional Protein, Domain 2"/>
    <property type="match status" value="1"/>
</dbReference>
<dbReference type="Gene3D" id="3.30.980.10">
    <property type="entry name" value="Threonyl-trna Synthetase, Chain A, domain 2"/>
    <property type="match status" value="1"/>
</dbReference>
<dbReference type="HAMAP" id="MF_00036_B">
    <property type="entry name" value="Ala_tRNA_synth_B"/>
    <property type="match status" value="1"/>
</dbReference>
<dbReference type="InterPro" id="IPR045864">
    <property type="entry name" value="aa-tRNA-synth_II/BPL/LPL"/>
</dbReference>
<dbReference type="InterPro" id="IPR002318">
    <property type="entry name" value="Ala-tRNA-lgiase_IIc"/>
</dbReference>
<dbReference type="InterPro" id="IPR018162">
    <property type="entry name" value="Ala-tRNA-ligase_IIc_anticod-bd"/>
</dbReference>
<dbReference type="InterPro" id="IPR018165">
    <property type="entry name" value="Ala-tRNA-synth_IIc_core"/>
</dbReference>
<dbReference type="InterPro" id="IPR018164">
    <property type="entry name" value="Ala-tRNA-synth_IIc_N"/>
</dbReference>
<dbReference type="InterPro" id="IPR050058">
    <property type="entry name" value="Ala-tRNA_ligase"/>
</dbReference>
<dbReference type="InterPro" id="IPR023033">
    <property type="entry name" value="Ala_tRNA_ligase_euk/bac"/>
</dbReference>
<dbReference type="InterPro" id="IPR003156">
    <property type="entry name" value="DHHA1_dom"/>
</dbReference>
<dbReference type="InterPro" id="IPR018163">
    <property type="entry name" value="Thr/Ala-tRNA-synth_IIc_edit"/>
</dbReference>
<dbReference type="InterPro" id="IPR009000">
    <property type="entry name" value="Transl_B-barrel_sf"/>
</dbReference>
<dbReference type="InterPro" id="IPR012947">
    <property type="entry name" value="tRNA_SAD"/>
</dbReference>
<dbReference type="NCBIfam" id="TIGR00344">
    <property type="entry name" value="alaS"/>
    <property type="match status" value="1"/>
</dbReference>
<dbReference type="PANTHER" id="PTHR11777:SF9">
    <property type="entry name" value="ALANINE--TRNA LIGASE, CYTOPLASMIC"/>
    <property type="match status" value="1"/>
</dbReference>
<dbReference type="PANTHER" id="PTHR11777">
    <property type="entry name" value="ALANYL-TRNA SYNTHETASE"/>
    <property type="match status" value="1"/>
</dbReference>
<dbReference type="Pfam" id="PF02272">
    <property type="entry name" value="DHHA1"/>
    <property type="match status" value="1"/>
</dbReference>
<dbReference type="Pfam" id="PF01411">
    <property type="entry name" value="tRNA-synt_2c"/>
    <property type="match status" value="1"/>
</dbReference>
<dbReference type="Pfam" id="PF07973">
    <property type="entry name" value="tRNA_SAD"/>
    <property type="match status" value="1"/>
</dbReference>
<dbReference type="PRINTS" id="PR00980">
    <property type="entry name" value="TRNASYNTHALA"/>
</dbReference>
<dbReference type="SMART" id="SM00863">
    <property type="entry name" value="tRNA_SAD"/>
    <property type="match status" value="1"/>
</dbReference>
<dbReference type="SUPFAM" id="SSF55681">
    <property type="entry name" value="Class II aaRS and biotin synthetases"/>
    <property type="match status" value="1"/>
</dbReference>
<dbReference type="SUPFAM" id="SSF101353">
    <property type="entry name" value="Putative anticodon-binding domain of alanyl-tRNA synthetase (AlaRS)"/>
    <property type="match status" value="1"/>
</dbReference>
<dbReference type="SUPFAM" id="SSF55186">
    <property type="entry name" value="ThrRS/AlaRS common domain"/>
    <property type="match status" value="1"/>
</dbReference>
<dbReference type="SUPFAM" id="SSF50447">
    <property type="entry name" value="Translation proteins"/>
    <property type="match status" value="1"/>
</dbReference>
<dbReference type="PROSITE" id="PS50860">
    <property type="entry name" value="AA_TRNA_LIGASE_II_ALA"/>
    <property type="match status" value="1"/>
</dbReference>
<organism>
    <name type="scientific">Leptothrix cholodnii (strain ATCC 51168 / LMG 8142 / SP-6)</name>
    <name type="common">Leptothrix discophora (strain SP-6)</name>
    <dbReference type="NCBI Taxonomy" id="395495"/>
    <lineage>
        <taxon>Bacteria</taxon>
        <taxon>Pseudomonadati</taxon>
        <taxon>Pseudomonadota</taxon>
        <taxon>Betaproteobacteria</taxon>
        <taxon>Burkholderiales</taxon>
        <taxon>Sphaerotilaceae</taxon>
        <taxon>Leptothrix</taxon>
    </lineage>
</organism>
<evidence type="ECO:0000255" key="1">
    <source>
        <dbReference type="HAMAP-Rule" id="MF_00036"/>
    </source>
</evidence>
<accession>B1Y1G9</accession>